<dbReference type="EMBL" id="CT978603">
    <property type="protein sequence ID" value="CAK28873.1"/>
    <property type="molecule type" value="Genomic_DNA"/>
</dbReference>
<dbReference type="SMR" id="A5GVG4"/>
<dbReference type="STRING" id="316278.SynRCC307_1970"/>
<dbReference type="KEGG" id="syr:SynRCC307_1970"/>
<dbReference type="eggNOG" id="COG0532">
    <property type="taxonomic scope" value="Bacteria"/>
</dbReference>
<dbReference type="HOGENOM" id="CLU_006301_5_1_3"/>
<dbReference type="OrthoDB" id="9811804at2"/>
<dbReference type="Proteomes" id="UP000001115">
    <property type="component" value="Chromosome"/>
</dbReference>
<dbReference type="GO" id="GO:0005829">
    <property type="term" value="C:cytosol"/>
    <property type="evidence" value="ECO:0007669"/>
    <property type="project" value="TreeGrafter"/>
</dbReference>
<dbReference type="GO" id="GO:0005525">
    <property type="term" value="F:GTP binding"/>
    <property type="evidence" value="ECO:0007669"/>
    <property type="project" value="UniProtKB-KW"/>
</dbReference>
<dbReference type="GO" id="GO:0003924">
    <property type="term" value="F:GTPase activity"/>
    <property type="evidence" value="ECO:0007669"/>
    <property type="project" value="UniProtKB-UniRule"/>
</dbReference>
<dbReference type="GO" id="GO:0003743">
    <property type="term" value="F:translation initiation factor activity"/>
    <property type="evidence" value="ECO:0007669"/>
    <property type="project" value="UniProtKB-UniRule"/>
</dbReference>
<dbReference type="CDD" id="cd01887">
    <property type="entry name" value="IF2_eIF5B"/>
    <property type="match status" value="1"/>
</dbReference>
<dbReference type="CDD" id="cd03702">
    <property type="entry name" value="IF2_mtIF2_II"/>
    <property type="match status" value="1"/>
</dbReference>
<dbReference type="CDD" id="cd03692">
    <property type="entry name" value="mtIF2_IVc"/>
    <property type="match status" value="1"/>
</dbReference>
<dbReference type="FunFam" id="2.40.30.10:FF:000007">
    <property type="entry name" value="Translation initiation factor IF-2"/>
    <property type="match status" value="1"/>
</dbReference>
<dbReference type="FunFam" id="2.40.30.10:FF:000008">
    <property type="entry name" value="Translation initiation factor IF-2"/>
    <property type="match status" value="1"/>
</dbReference>
<dbReference type="FunFam" id="3.40.50.10050:FF:000001">
    <property type="entry name" value="Translation initiation factor IF-2"/>
    <property type="match status" value="1"/>
</dbReference>
<dbReference type="FunFam" id="3.40.50.300:FF:000019">
    <property type="entry name" value="Translation initiation factor IF-2"/>
    <property type="match status" value="1"/>
</dbReference>
<dbReference type="Gene3D" id="1.10.10.2480">
    <property type="match status" value="1"/>
</dbReference>
<dbReference type="Gene3D" id="3.40.50.300">
    <property type="entry name" value="P-loop containing nucleotide triphosphate hydrolases"/>
    <property type="match status" value="1"/>
</dbReference>
<dbReference type="Gene3D" id="2.40.30.10">
    <property type="entry name" value="Translation factors"/>
    <property type="match status" value="2"/>
</dbReference>
<dbReference type="Gene3D" id="3.40.50.10050">
    <property type="entry name" value="Translation initiation factor IF- 2, domain 3"/>
    <property type="match status" value="1"/>
</dbReference>
<dbReference type="HAMAP" id="MF_00100_B">
    <property type="entry name" value="IF_2_B"/>
    <property type="match status" value="1"/>
</dbReference>
<dbReference type="InterPro" id="IPR053905">
    <property type="entry name" value="EF-G-like_DII"/>
</dbReference>
<dbReference type="InterPro" id="IPR044145">
    <property type="entry name" value="IF2_II"/>
</dbReference>
<dbReference type="InterPro" id="IPR006847">
    <property type="entry name" value="IF2_N"/>
</dbReference>
<dbReference type="InterPro" id="IPR027417">
    <property type="entry name" value="P-loop_NTPase"/>
</dbReference>
<dbReference type="InterPro" id="IPR005225">
    <property type="entry name" value="Small_GTP-bd"/>
</dbReference>
<dbReference type="InterPro" id="IPR000795">
    <property type="entry name" value="T_Tr_GTP-bd_dom"/>
</dbReference>
<dbReference type="InterPro" id="IPR000178">
    <property type="entry name" value="TF_IF2_bacterial-like"/>
</dbReference>
<dbReference type="InterPro" id="IPR015760">
    <property type="entry name" value="TIF_IF2"/>
</dbReference>
<dbReference type="InterPro" id="IPR023115">
    <property type="entry name" value="TIF_IF2_dom3"/>
</dbReference>
<dbReference type="InterPro" id="IPR036925">
    <property type="entry name" value="TIF_IF2_dom3_sf"/>
</dbReference>
<dbReference type="InterPro" id="IPR009000">
    <property type="entry name" value="Transl_B-barrel_sf"/>
</dbReference>
<dbReference type="NCBIfam" id="TIGR00487">
    <property type="entry name" value="IF-2"/>
    <property type="match status" value="1"/>
</dbReference>
<dbReference type="NCBIfam" id="TIGR00231">
    <property type="entry name" value="small_GTP"/>
    <property type="match status" value="1"/>
</dbReference>
<dbReference type="PANTHER" id="PTHR43381:SF5">
    <property type="entry name" value="TR-TYPE G DOMAIN-CONTAINING PROTEIN"/>
    <property type="match status" value="1"/>
</dbReference>
<dbReference type="PANTHER" id="PTHR43381">
    <property type="entry name" value="TRANSLATION INITIATION FACTOR IF-2-RELATED"/>
    <property type="match status" value="1"/>
</dbReference>
<dbReference type="Pfam" id="PF22042">
    <property type="entry name" value="EF-G_D2"/>
    <property type="match status" value="1"/>
</dbReference>
<dbReference type="Pfam" id="PF00009">
    <property type="entry name" value="GTP_EFTU"/>
    <property type="match status" value="1"/>
</dbReference>
<dbReference type="Pfam" id="PF11987">
    <property type="entry name" value="IF-2"/>
    <property type="match status" value="1"/>
</dbReference>
<dbReference type="Pfam" id="PF04760">
    <property type="entry name" value="IF2_N"/>
    <property type="match status" value="2"/>
</dbReference>
<dbReference type="PRINTS" id="PR00315">
    <property type="entry name" value="ELONGATNFCT"/>
</dbReference>
<dbReference type="SUPFAM" id="SSF52156">
    <property type="entry name" value="Initiation factor IF2/eIF5b, domain 3"/>
    <property type="match status" value="1"/>
</dbReference>
<dbReference type="SUPFAM" id="SSF52540">
    <property type="entry name" value="P-loop containing nucleoside triphosphate hydrolases"/>
    <property type="match status" value="1"/>
</dbReference>
<dbReference type="SUPFAM" id="SSF50447">
    <property type="entry name" value="Translation proteins"/>
    <property type="match status" value="2"/>
</dbReference>
<dbReference type="PROSITE" id="PS51722">
    <property type="entry name" value="G_TR_2"/>
    <property type="match status" value="1"/>
</dbReference>
<dbReference type="PROSITE" id="PS01176">
    <property type="entry name" value="IF2"/>
    <property type="match status" value="1"/>
</dbReference>
<evidence type="ECO:0000250" key="1"/>
<evidence type="ECO:0000255" key="2">
    <source>
        <dbReference type="HAMAP-Rule" id="MF_00100"/>
    </source>
</evidence>
<evidence type="ECO:0000256" key="3">
    <source>
        <dbReference type="SAM" id="MobiDB-lite"/>
    </source>
</evidence>
<keyword id="KW-0963">Cytoplasm</keyword>
<keyword id="KW-0342">GTP-binding</keyword>
<keyword id="KW-0396">Initiation factor</keyword>
<keyword id="KW-0547">Nucleotide-binding</keyword>
<keyword id="KW-0648">Protein biosynthesis</keyword>
<keyword id="KW-1185">Reference proteome</keyword>
<protein>
    <recommendedName>
        <fullName evidence="2">Translation initiation factor IF-2</fullName>
    </recommendedName>
</protein>
<name>IF2_SYNR3</name>
<gene>
    <name evidence="2" type="primary">infB</name>
    <name type="ordered locus">SynRCC307_1970</name>
</gene>
<proteinExistence type="inferred from homology"/>
<reference key="1">
    <citation type="submission" date="2006-05" db="EMBL/GenBank/DDBJ databases">
        <authorList>
            <consortium name="Genoscope"/>
        </authorList>
    </citation>
    <scope>NUCLEOTIDE SEQUENCE [LARGE SCALE GENOMIC DNA]</scope>
    <source>
        <strain>RCC307</strain>
    </source>
</reference>
<accession>A5GVG4</accession>
<comment type="function">
    <text evidence="2">One of the essential components for the initiation of protein synthesis. Protects formylmethionyl-tRNA from spontaneous hydrolysis and promotes its binding to the 30S ribosomal subunits. Also involved in the hydrolysis of GTP during the formation of the 70S ribosomal complex.</text>
</comment>
<comment type="subcellular location">
    <subcellularLocation>
        <location evidence="2">Cytoplasm</location>
    </subcellularLocation>
</comment>
<comment type="similarity">
    <text evidence="2">Belongs to the TRAFAC class translation factor GTPase superfamily. Classic translation factor GTPase family. IF-2 subfamily.</text>
</comment>
<sequence>MTSGGKVRIYELSRDLGLDNRDVLNAAEKLSIAAKSHSSSISDGEAAKIKALLNSNGKAAGGAKAPAKPDAGNQILSLKKAPSTPSQSAGAPASAPPSRKPEIVAKPAAPASPAKPAPSAPPSRKPEIVAKPAAPASPAKPAPSAPPSRKPEVVAKPAAPASPAKPAPKPVAKPVAKPASAPAPARPAQPLRPQASNRPPQQPSNRPPARPAAKPPVVMSKPTAPPPRPARPGAPAPRRDQNRPAVPMRPPNQQQRPSPQRSGPPRSGAPIRPGAPQRPGMPGRGGAPQQRRGPGGPGGRPPSSLELVGKPIRREPNAPQGRQGGAPSRPGGPGGMRKPVSPGELMQLQKPGSRPTPGDGPRRPPARPGSEAPRRPGEAPNRPNAPTAPPRRPGYRPAAAPGMAGRPRRPDWDDSARLDALRSRSPQKQRQKVHIIGENDDSLAAQTGGFAGGQEALVLQASLARPSKPKNLPGNKGARPVALRRRKKETTRQRQRRRAMELRQAREAKQIRPEMLVVPEGNLTVQELADKLSVESSEIIKSLFFKGIIATVTQTLDLESIEKVSQEFGVPVLQDDIEEAAKKTVEMIEESDLDHLIRRPPVVTVMGHVDHGKTSLLDAIRKTRVAAGEAGGITQHIGAYQVDVDHAGASKKVTFLDTPGHEAFTAMRARGTKVTDVAILVVAADDGVRPQTLEAISHARAAEVPIVVAINKVDKEGAQIDRVKQELSDQSLLAEDWGGDTVMVPVSALKGEGLDKLLEMILLVTEVEDLKANPERMAKGTVVEAHLDKAKGPVATLLVQNGTLRPGDVVAAGPVLGKVRAMVNDSGRRVKEAAPSSAVEVLGFSEVPAAGDEFEVYPDEKAARSVVGDRASEARATRLAQQMASRRVSLTSMSGQASEGELKELNLILKADVQGSVEAILGMLEQLPQGEVQVRVLLSAPGEVTETDVDLAAASGAVIVGFNTTLASGARRAAELAGVDVRDYNVIYKLLEDIQAAMEGLLEPELVESPLGEAEVRAVFSIGKSAVAGCYVTSGSIQRNCKIRVHRGKQLVFSGDLDSLKRMKNDVKEVNTGFECGFGCDRFADWQEGDRVEAFAMVTQRRTLAT</sequence>
<organism>
    <name type="scientific">Synechococcus sp. (strain RCC307)</name>
    <dbReference type="NCBI Taxonomy" id="316278"/>
    <lineage>
        <taxon>Bacteria</taxon>
        <taxon>Bacillati</taxon>
        <taxon>Cyanobacteriota</taxon>
        <taxon>Cyanophyceae</taxon>
        <taxon>Synechococcales</taxon>
        <taxon>Synechococcaceae</taxon>
        <taxon>Synechococcus</taxon>
    </lineage>
</organism>
<feature type="chain" id="PRO_1000008362" description="Translation initiation factor IF-2">
    <location>
        <begin position="1"/>
        <end position="1106"/>
    </location>
</feature>
<feature type="domain" description="tr-type G">
    <location>
        <begin position="598"/>
        <end position="771"/>
    </location>
</feature>
<feature type="region of interest" description="Disordered" evidence="3">
    <location>
        <begin position="57"/>
        <end position="434"/>
    </location>
</feature>
<feature type="region of interest" description="Disordered" evidence="3">
    <location>
        <begin position="466"/>
        <end position="497"/>
    </location>
</feature>
<feature type="region of interest" description="G1" evidence="1">
    <location>
        <begin position="607"/>
        <end position="614"/>
    </location>
</feature>
<feature type="region of interest" description="G2" evidence="1">
    <location>
        <begin position="632"/>
        <end position="636"/>
    </location>
</feature>
<feature type="region of interest" description="G3" evidence="1">
    <location>
        <begin position="657"/>
        <end position="660"/>
    </location>
</feature>
<feature type="region of interest" description="G4" evidence="1">
    <location>
        <begin position="711"/>
        <end position="714"/>
    </location>
</feature>
<feature type="region of interest" description="G5" evidence="1">
    <location>
        <begin position="747"/>
        <end position="749"/>
    </location>
</feature>
<feature type="compositionally biased region" description="Low complexity" evidence="3">
    <location>
        <begin position="57"/>
        <end position="72"/>
    </location>
</feature>
<feature type="compositionally biased region" description="Low complexity" evidence="3">
    <location>
        <begin position="81"/>
        <end position="97"/>
    </location>
</feature>
<feature type="compositionally biased region" description="Pro residues" evidence="3">
    <location>
        <begin position="113"/>
        <end position="123"/>
    </location>
</feature>
<feature type="compositionally biased region" description="Pro residues" evidence="3">
    <location>
        <begin position="138"/>
        <end position="148"/>
    </location>
</feature>
<feature type="compositionally biased region" description="Low complexity" evidence="3">
    <location>
        <begin position="172"/>
        <end position="199"/>
    </location>
</feature>
<feature type="compositionally biased region" description="Pro residues" evidence="3">
    <location>
        <begin position="200"/>
        <end position="214"/>
    </location>
</feature>
<feature type="compositionally biased region" description="Pro residues" evidence="3">
    <location>
        <begin position="223"/>
        <end position="235"/>
    </location>
</feature>
<feature type="compositionally biased region" description="Low complexity" evidence="3">
    <location>
        <begin position="251"/>
        <end position="292"/>
    </location>
</feature>
<feature type="compositionally biased region" description="Low complexity" evidence="3">
    <location>
        <begin position="319"/>
        <end position="329"/>
    </location>
</feature>
<feature type="compositionally biased region" description="Low complexity" evidence="3">
    <location>
        <begin position="395"/>
        <end position="405"/>
    </location>
</feature>
<feature type="compositionally biased region" description="Basic and acidic residues" evidence="3">
    <location>
        <begin position="408"/>
        <end position="422"/>
    </location>
</feature>
<feature type="compositionally biased region" description="Basic residues" evidence="3">
    <location>
        <begin position="482"/>
        <end position="497"/>
    </location>
</feature>
<feature type="binding site" evidence="2">
    <location>
        <begin position="607"/>
        <end position="614"/>
    </location>
    <ligand>
        <name>GTP</name>
        <dbReference type="ChEBI" id="CHEBI:37565"/>
    </ligand>
</feature>
<feature type="binding site" evidence="2">
    <location>
        <begin position="657"/>
        <end position="661"/>
    </location>
    <ligand>
        <name>GTP</name>
        <dbReference type="ChEBI" id="CHEBI:37565"/>
    </ligand>
</feature>
<feature type="binding site" evidence="2">
    <location>
        <begin position="711"/>
        <end position="714"/>
    </location>
    <ligand>
        <name>GTP</name>
        <dbReference type="ChEBI" id="CHEBI:37565"/>
    </ligand>
</feature>